<feature type="chain" id="PRO_0000375724" description="Succinyl-diaminopimelate desuccinylase">
    <location>
        <begin position="1"/>
        <end position="375"/>
    </location>
</feature>
<feature type="active site" evidence="1">
    <location>
        <position position="68"/>
    </location>
</feature>
<feature type="active site" description="Proton acceptor" evidence="1">
    <location>
        <position position="133"/>
    </location>
</feature>
<feature type="binding site" evidence="1">
    <location>
        <position position="66"/>
    </location>
    <ligand>
        <name>Zn(2+)</name>
        <dbReference type="ChEBI" id="CHEBI:29105"/>
        <label>1</label>
    </ligand>
</feature>
<feature type="binding site" evidence="1">
    <location>
        <position position="99"/>
    </location>
    <ligand>
        <name>Zn(2+)</name>
        <dbReference type="ChEBI" id="CHEBI:29105"/>
        <label>1</label>
    </ligand>
</feature>
<feature type="binding site" evidence="1">
    <location>
        <position position="99"/>
    </location>
    <ligand>
        <name>Zn(2+)</name>
        <dbReference type="ChEBI" id="CHEBI:29105"/>
        <label>2</label>
    </ligand>
</feature>
<feature type="binding site" evidence="1">
    <location>
        <position position="134"/>
    </location>
    <ligand>
        <name>Zn(2+)</name>
        <dbReference type="ChEBI" id="CHEBI:29105"/>
        <label>2</label>
    </ligand>
</feature>
<feature type="binding site" evidence="1">
    <location>
        <position position="162"/>
    </location>
    <ligand>
        <name>Zn(2+)</name>
        <dbReference type="ChEBI" id="CHEBI:29105"/>
        <label>1</label>
    </ligand>
</feature>
<feature type="binding site" evidence="1">
    <location>
        <position position="348"/>
    </location>
    <ligand>
        <name>Zn(2+)</name>
        <dbReference type="ChEBI" id="CHEBI:29105"/>
        <label>2</label>
    </ligand>
</feature>
<accession>A8GHK9</accession>
<reference key="1">
    <citation type="submission" date="2007-09" db="EMBL/GenBank/DDBJ databases">
        <title>Complete sequence of chromosome of Serratia proteamaculans 568.</title>
        <authorList>
            <consortium name="US DOE Joint Genome Institute"/>
            <person name="Copeland A."/>
            <person name="Lucas S."/>
            <person name="Lapidus A."/>
            <person name="Barry K."/>
            <person name="Glavina del Rio T."/>
            <person name="Dalin E."/>
            <person name="Tice H."/>
            <person name="Pitluck S."/>
            <person name="Chain P."/>
            <person name="Malfatti S."/>
            <person name="Shin M."/>
            <person name="Vergez L."/>
            <person name="Schmutz J."/>
            <person name="Larimer F."/>
            <person name="Land M."/>
            <person name="Hauser L."/>
            <person name="Kyrpides N."/>
            <person name="Kim E."/>
            <person name="Taghavi S."/>
            <person name="Newman L."/>
            <person name="Vangronsveld J."/>
            <person name="van der Lelie D."/>
            <person name="Richardson P."/>
        </authorList>
    </citation>
    <scope>NUCLEOTIDE SEQUENCE [LARGE SCALE GENOMIC DNA]</scope>
    <source>
        <strain>568</strain>
    </source>
</reference>
<name>DAPE_SERP5</name>
<dbReference type="EC" id="3.5.1.18" evidence="1"/>
<dbReference type="EMBL" id="CP000826">
    <property type="protein sequence ID" value="ABV42599.1"/>
    <property type="molecule type" value="Genomic_DNA"/>
</dbReference>
<dbReference type="SMR" id="A8GHK9"/>
<dbReference type="STRING" id="399741.Spro_3501"/>
<dbReference type="KEGG" id="spe:Spro_3501"/>
<dbReference type="eggNOG" id="COG0624">
    <property type="taxonomic scope" value="Bacteria"/>
</dbReference>
<dbReference type="HOGENOM" id="CLU_021802_4_0_6"/>
<dbReference type="OrthoDB" id="9809784at2"/>
<dbReference type="UniPathway" id="UPA00034">
    <property type="reaction ID" value="UER00021"/>
</dbReference>
<dbReference type="GO" id="GO:0008777">
    <property type="term" value="F:acetylornithine deacetylase activity"/>
    <property type="evidence" value="ECO:0007669"/>
    <property type="project" value="TreeGrafter"/>
</dbReference>
<dbReference type="GO" id="GO:0050897">
    <property type="term" value="F:cobalt ion binding"/>
    <property type="evidence" value="ECO:0007669"/>
    <property type="project" value="UniProtKB-UniRule"/>
</dbReference>
<dbReference type="GO" id="GO:0009014">
    <property type="term" value="F:succinyl-diaminopimelate desuccinylase activity"/>
    <property type="evidence" value="ECO:0007669"/>
    <property type="project" value="UniProtKB-UniRule"/>
</dbReference>
<dbReference type="GO" id="GO:0008270">
    <property type="term" value="F:zinc ion binding"/>
    <property type="evidence" value="ECO:0007669"/>
    <property type="project" value="UniProtKB-UniRule"/>
</dbReference>
<dbReference type="GO" id="GO:0019877">
    <property type="term" value="P:diaminopimelate biosynthetic process"/>
    <property type="evidence" value="ECO:0007669"/>
    <property type="project" value="UniProtKB-UniRule"/>
</dbReference>
<dbReference type="GO" id="GO:0006526">
    <property type="term" value="P:L-arginine biosynthetic process"/>
    <property type="evidence" value="ECO:0007669"/>
    <property type="project" value="TreeGrafter"/>
</dbReference>
<dbReference type="GO" id="GO:0009089">
    <property type="term" value="P:lysine biosynthetic process via diaminopimelate"/>
    <property type="evidence" value="ECO:0007669"/>
    <property type="project" value="UniProtKB-UniRule"/>
</dbReference>
<dbReference type="CDD" id="cd03891">
    <property type="entry name" value="M20_DapE_proteobac"/>
    <property type="match status" value="1"/>
</dbReference>
<dbReference type="FunFam" id="3.30.70.360:FF:000011">
    <property type="entry name" value="Succinyl-diaminopimelate desuccinylase"/>
    <property type="match status" value="1"/>
</dbReference>
<dbReference type="FunFam" id="3.40.630.10:FF:000005">
    <property type="entry name" value="Succinyl-diaminopimelate desuccinylase"/>
    <property type="match status" value="1"/>
</dbReference>
<dbReference type="FunFam" id="3.40.630.10:FF:000010">
    <property type="entry name" value="Succinyl-diaminopimelate desuccinylase"/>
    <property type="match status" value="1"/>
</dbReference>
<dbReference type="Gene3D" id="3.40.630.10">
    <property type="entry name" value="Zn peptidases"/>
    <property type="match status" value="2"/>
</dbReference>
<dbReference type="HAMAP" id="MF_01690">
    <property type="entry name" value="DapE"/>
    <property type="match status" value="1"/>
</dbReference>
<dbReference type="InterPro" id="IPR001261">
    <property type="entry name" value="ArgE/DapE_CS"/>
</dbReference>
<dbReference type="InterPro" id="IPR036264">
    <property type="entry name" value="Bact_exopeptidase_dim_dom"/>
</dbReference>
<dbReference type="InterPro" id="IPR005941">
    <property type="entry name" value="DapE_proteobac"/>
</dbReference>
<dbReference type="InterPro" id="IPR002933">
    <property type="entry name" value="Peptidase_M20"/>
</dbReference>
<dbReference type="InterPro" id="IPR011650">
    <property type="entry name" value="Peptidase_M20_dimer"/>
</dbReference>
<dbReference type="InterPro" id="IPR050072">
    <property type="entry name" value="Peptidase_M20A"/>
</dbReference>
<dbReference type="NCBIfam" id="TIGR01246">
    <property type="entry name" value="dapE_proteo"/>
    <property type="match status" value="1"/>
</dbReference>
<dbReference type="NCBIfam" id="NF009557">
    <property type="entry name" value="PRK13009.1"/>
    <property type="match status" value="1"/>
</dbReference>
<dbReference type="PANTHER" id="PTHR43808">
    <property type="entry name" value="ACETYLORNITHINE DEACETYLASE"/>
    <property type="match status" value="1"/>
</dbReference>
<dbReference type="PANTHER" id="PTHR43808:SF31">
    <property type="entry name" value="N-ACETYL-L-CITRULLINE DEACETYLASE"/>
    <property type="match status" value="1"/>
</dbReference>
<dbReference type="Pfam" id="PF07687">
    <property type="entry name" value="M20_dimer"/>
    <property type="match status" value="1"/>
</dbReference>
<dbReference type="Pfam" id="PF01546">
    <property type="entry name" value="Peptidase_M20"/>
    <property type="match status" value="1"/>
</dbReference>
<dbReference type="SUPFAM" id="SSF55031">
    <property type="entry name" value="Bacterial exopeptidase dimerisation domain"/>
    <property type="match status" value="1"/>
</dbReference>
<dbReference type="SUPFAM" id="SSF53187">
    <property type="entry name" value="Zn-dependent exopeptidases"/>
    <property type="match status" value="1"/>
</dbReference>
<dbReference type="PROSITE" id="PS00758">
    <property type="entry name" value="ARGE_DAPE_CPG2_1"/>
    <property type="match status" value="1"/>
</dbReference>
<dbReference type="PROSITE" id="PS00759">
    <property type="entry name" value="ARGE_DAPE_CPG2_2"/>
    <property type="match status" value="1"/>
</dbReference>
<organism>
    <name type="scientific">Serratia proteamaculans (strain 568)</name>
    <dbReference type="NCBI Taxonomy" id="399741"/>
    <lineage>
        <taxon>Bacteria</taxon>
        <taxon>Pseudomonadati</taxon>
        <taxon>Pseudomonadota</taxon>
        <taxon>Gammaproteobacteria</taxon>
        <taxon>Enterobacterales</taxon>
        <taxon>Yersiniaceae</taxon>
        <taxon>Serratia</taxon>
    </lineage>
</organism>
<protein>
    <recommendedName>
        <fullName evidence="1">Succinyl-diaminopimelate desuccinylase</fullName>
        <shortName evidence="1">SDAP desuccinylase</shortName>
        <ecNumber evidence="1">3.5.1.18</ecNumber>
    </recommendedName>
    <alternativeName>
        <fullName evidence="1">N-succinyl-LL-2,6-diaminoheptanedioate amidohydrolase</fullName>
    </alternativeName>
</protein>
<gene>
    <name evidence="1" type="primary">dapE</name>
    <name type="ordered locus">Spro_3501</name>
</gene>
<evidence type="ECO:0000255" key="1">
    <source>
        <dbReference type="HAMAP-Rule" id="MF_01690"/>
    </source>
</evidence>
<keyword id="KW-0028">Amino-acid biosynthesis</keyword>
<keyword id="KW-0170">Cobalt</keyword>
<keyword id="KW-0220">Diaminopimelate biosynthesis</keyword>
<keyword id="KW-0378">Hydrolase</keyword>
<keyword id="KW-0457">Lysine biosynthesis</keyword>
<keyword id="KW-0479">Metal-binding</keyword>
<keyword id="KW-0862">Zinc</keyword>
<sequence>MTCPVIELAQQLIKRPSLSPHDEGCQALMIERLEAIGFTVEPMPFGDTLNFWAWRGEGQTLAFAGHTDVVPTGDEKRWDNPPFEPTIRDGMLYGRGAADMKGSLAAMVVAAERFVAANPHHQGRLAFLITSDEEASATHGTVKVVEALMARNERLDYCLVGEPSSTERVGDVVKNGRRGSITANLHIHGIQGHVAYPHLADNPVHRAMPALNELVAIEWDRGNEFFPPTSMQIANVQAGTGSNNVIPGEMFVQFNFRFSTESTDATIKQRVEELLERHQLNYSIEWRLSGQPFLTARGALVDAVVNAVEHYSELTPQLLTTGGTSDGRFIAQMGAQVVELGPVNATIHKVNECVHAADLQLLSRMYQRIMEQLVA</sequence>
<comment type="function">
    <text evidence="1">Catalyzes the hydrolysis of N-succinyl-L,L-diaminopimelic acid (SDAP), forming succinate and LL-2,6-diaminopimelate (DAP), an intermediate involved in the bacterial biosynthesis of lysine and meso-diaminopimelic acid, an essential component of bacterial cell walls.</text>
</comment>
<comment type="catalytic activity">
    <reaction evidence="1">
        <text>N-succinyl-(2S,6S)-2,6-diaminopimelate + H2O = (2S,6S)-2,6-diaminopimelate + succinate</text>
        <dbReference type="Rhea" id="RHEA:22608"/>
        <dbReference type="ChEBI" id="CHEBI:15377"/>
        <dbReference type="ChEBI" id="CHEBI:30031"/>
        <dbReference type="ChEBI" id="CHEBI:57609"/>
        <dbReference type="ChEBI" id="CHEBI:58087"/>
        <dbReference type="EC" id="3.5.1.18"/>
    </reaction>
</comment>
<comment type="cofactor">
    <cofactor evidence="1">
        <name>Zn(2+)</name>
        <dbReference type="ChEBI" id="CHEBI:29105"/>
    </cofactor>
    <cofactor evidence="1">
        <name>Co(2+)</name>
        <dbReference type="ChEBI" id="CHEBI:48828"/>
    </cofactor>
    <text evidence="1">Binds 2 Zn(2+) or Co(2+) ions per subunit.</text>
</comment>
<comment type="pathway">
    <text evidence="1">Amino-acid biosynthesis; L-lysine biosynthesis via DAP pathway; LL-2,6-diaminopimelate from (S)-tetrahydrodipicolinate (succinylase route): step 3/3.</text>
</comment>
<comment type="subunit">
    <text evidence="1">Homodimer.</text>
</comment>
<comment type="similarity">
    <text evidence="1">Belongs to the peptidase M20A family. DapE subfamily.</text>
</comment>
<proteinExistence type="inferred from homology"/>